<sequence>MSDSGSYGQSGGEQQSYSTYGNPGSQGYGQASQSYSGYGQTTDSSYGQNYSGYSSYGQSQSGYSQSYGGYENQKQSSYSQQPYNNQGQQQNMESSGSQGGRAPSYDQPDYGQQDSYDQQSGYDQHQGSYDEQSNYDQQHDSYSQNQQSYHSQRENYSHHTQDDRRDVSRYGEDNRGYGGSQGGGRGRGGYDKDGRGPMTGSSGGDRGGFKNFGGHRDYGPRTDADSESDNSDNNTIFVQGLGEGVSTDQVGEFFKQIGIIKTNKKTGKPMINLYTDKDTGKPKGEATVSFDDPPSAKAAIDWFDGKEFHGNIIKVSFATRRPEFMRGGGSGGGRRGRGGYRGRGGFQGRGGDPKSGDWVCPNPSCGNMNFARRNSCNQCNEPRPEDSRPSGGDFRGRGYGGERGYRGRGGRGGDRGGYGGDRSGGGYGGDRSSGGGYSGDRSGGGYGGDRSGGGYGGDRGGGYGGDRGGGYGGDRGGGYGGDRGGYGGDRGGGYGGDRGGYGGDRGGYGGDRGGYGGDRGGYGGDRSRGGYGGDRGGGSGYGGDRSGGYGGDRSGGGYGGDRGGGYGGDRGGYGGKMGGRNDYRNDQRNRPY</sequence>
<reference key="1">
    <citation type="journal article" date="1996" name="Genomics">
        <title>Cloning and mapping of a human RBP56 gene encoding a putative RNA binding protein similar to FUS/TLS and EWS proteins.</title>
        <authorList>
            <person name="Morohoshi F."/>
            <person name="Arai K."/>
            <person name="Takahashi E."/>
            <person name="Tanigami A."/>
            <person name="Ohki M."/>
        </authorList>
    </citation>
    <scope>NUCLEOTIDE SEQUENCE [MRNA] (ISOFORMS LONG AND SHORT)</scope>
</reference>
<reference key="2">
    <citation type="journal article" date="1996" name="EMBO J.">
        <title>hTAF(II)68, a novel RNA/ssDNA-binding protein with homology to the pro-oncoproteins TLS/FUS and EWS is associated with both TFIID and RNA polymerase II.</title>
        <authorList>
            <person name="Bertolotti A."/>
            <person name="Lutz Y."/>
            <person name="Heard D.J."/>
            <person name="Chambon P."/>
            <person name="Tora L."/>
        </authorList>
    </citation>
    <scope>NUCLEOTIDE SEQUENCE [MRNA] (ISOFORM SHORT)</scope>
    <scope>PROTEIN SEQUENCE OF 282-297 AND 307-320</scope>
</reference>
<reference key="3">
    <citation type="journal article" date="1998" name="Gene">
        <title>Genomic structure of the human RBP56/hTAFII68 and FUS/TLS genes.</title>
        <authorList>
            <person name="Morohoshi F."/>
            <person name="Ootsuka Y."/>
            <person name="Arai K."/>
            <person name="Ichikawa H."/>
            <person name="Mitani S."/>
            <person name="Munakata N."/>
            <person name="Ohki M."/>
        </authorList>
    </citation>
    <scope>NUCLEOTIDE SEQUENCE [GENOMIC DNA] (ISOFORMS LONG AND SHORT)</scope>
</reference>
<reference key="4">
    <citation type="submission" date="2002-12" db="EMBL/GenBank/DDBJ databases">
        <authorList>
            <consortium name="NIEHS SNPs program"/>
        </authorList>
    </citation>
    <scope>NUCLEOTIDE SEQUENCE [GENOMIC DNA]</scope>
</reference>
<reference key="5">
    <citation type="journal article" date="2004" name="Nat. Genet.">
        <title>Complete sequencing and characterization of 21,243 full-length human cDNAs.</title>
        <authorList>
            <person name="Ota T."/>
            <person name="Suzuki Y."/>
            <person name="Nishikawa T."/>
            <person name="Otsuki T."/>
            <person name="Sugiyama T."/>
            <person name="Irie R."/>
            <person name="Wakamatsu A."/>
            <person name="Hayashi K."/>
            <person name="Sato H."/>
            <person name="Nagai K."/>
            <person name="Kimura K."/>
            <person name="Makita H."/>
            <person name="Sekine M."/>
            <person name="Obayashi M."/>
            <person name="Nishi T."/>
            <person name="Shibahara T."/>
            <person name="Tanaka T."/>
            <person name="Ishii S."/>
            <person name="Yamamoto J."/>
            <person name="Saito K."/>
            <person name="Kawai Y."/>
            <person name="Isono Y."/>
            <person name="Nakamura Y."/>
            <person name="Nagahari K."/>
            <person name="Murakami K."/>
            <person name="Yasuda T."/>
            <person name="Iwayanagi T."/>
            <person name="Wagatsuma M."/>
            <person name="Shiratori A."/>
            <person name="Sudo H."/>
            <person name="Hosoiri T."/>
            <person name="Kaku Y."/>
            <person name="Kodaira H."/>
            <person name="Kondo H."/>
            <person name="Sugawara M."/>
            <person name="Takahashi M."/>
            <person name="Kanda K."/>
            <person name="Yokoi T."/>
            <person name="Furuya T."/>
            <person name="Kikkawa E."/>
            <person name="Omura Y."/>
            <person name="Abe K."/>
            <person name="Kamihara K."/>
            <person name="Katsuta N."/>
            <person name="Sato K."/>
            <person name="Tanikawa M."/>
            <person name="Yamazaki M."/>
            <person name="Ninomiya K."/>
            <person name="Ishibashi T."/>
            <person name="Yamashita H."/>
            <person name="Murakawa K."/>
            <person name="Fujimori K."/>
            <person name="Tanai H."/>
            <person name="Kimata M."/>
            <person name="Watanabe M."/>
            <person name="Hiraoka S."/>
            <person name="Chiba Y."/>
            <person name="Ishida S."/>
            <person name="Ono Y."/>
            <person name="Takiguchi S."/>
            <person name="Watanabe S."/>
            <person name="Yosida M."/>
            <person name="Hotuta T."/>
            <person name="Kusano J."/>
            <person name="Kanehori K."/>
            <person name="Takahashi-Fujii A."/>
            <person name="Hara H."/>
            <person name="Tanase T.-O."/>
            <person name="Nomura Y."/>
            <person name="Togiya S."/>
            <person name="Komai F."/>
            <person name="Hara R."/>
            <person name="Takeuchi K."/>
            <person name="Arita M."/>
            <person name="Imose N."/>
            <person name="Musashino K."/>
            <person name="Yuuki H."/>
            <person name="Oshima A."/>
            <person name="Sasaki N."/>
            <person name="Aotsuka S."/>
            <person name="Yoshikawa Y."/>
            <person name="Matsunawa H."/>
            <person name="Ichihara T."/>
            <person name="Shiohata N."/>
            <person name="Sano S."/>
            <person name="Moriya S."/>
            <person name="Momiyama H."/>
            <person name="Satoh N."/>
            <person name="Takami S."/>
            <person name="Terashima Y."/>
            <person name="Suzuki O."/>
            <person name="Nakagawa S."/>
            <person name="Senoh A."/>
            <person name="Mizoguchi H."/>
            <person name="Goto Y."/>
            <person name="Shimizu F."/>
            <person name="Wakebe H."/>
            <person name="Hishigaki H."/>
            <person name="Watanabe T."/>
            <person name="Sugiyama A."/>
            <person name="Takemoto M."/>
            <person name="Kawakami B."/>
            <person name="Yamazaki M."/>
            <person name="Watanabe K."/>
            <person name="Kumagai A."/>
            <person name="Itakura S."/>
            <person name="Fukuzumi Y."/>
            <person name="Fujimori Y."/>
            <person name="Komiyama M."/>
            <person name="Tashiro H."/>
            <person name="Tanigami A."/>
            <person name="Fujiwara T."/>
            <person name="Ono T."/>
            <person name="Yamada K."/>
            <person name="Fujii Y."/>
            <person name="Ozaki K."/>
            <person name="Hirao M."/>
            <person name="Ohmori Y."/>
            <person name="Kawabata A."/>
            <person name="Hikiji T."/>
            <person name="Kobatake N."/>
            <person name="Inagaki H."/>
            <person name="Ikema Y."/>
            <person name="Okamoto S."/>
            <person name="Okitani R."/>
            <person name="Kawakami T."/>
            <person name="Noguchi S."/>
            <person name="Itoh T."/>
            <person name="Shigeta K."/>
            <person name="Senba T."/>
            <person name="Matsumura K."/>
            <person name="Nakajima Y."/>
            <person name="Mizuno T."/>
            <person name="Morinaga M."/>
            <person name="Sasaki M."/>
            <person name="Togashi T."/>
            <person name="Oyama M."/>
            <person name="Hata H."/>
            <person name="Watanabe M."/>
            <person name="Komatsu T."/>
            <person name="Mizushima-Sugano J."/>
            <person name="Satoh T."/>
            <person name="Shirai Y."/>
            <person name="Takahashi Y."/>
            <person name="Nakagawa K."/>
            <person name="Okumura K."/>
            <person name="Nagase T."/>
            <person name="Nomura N."/>
            <person name="Kikuchi H."/>
            <person name="Masuho Y."/>
            <person name="Yamashita R."/>
            <person name="Nakai K."/>
            <person name="Yada T."/>
            <person name="Nakamura Y."/>
            <person name="Ohara O."/>
            <person name="Isogai T."/>
            <person name="Sugano S."/>
        </authorList>
    </citation>
    <scope>NUCLEOTIDE SEQUENCE [LARGE SCALE MRNA] (ISOFORMS SHORT AND LONG)</scope>
    <source>
        <tissue>Tongue</tissue>
    </source>
</reference>
<reference key="6">
    <citation type="journal article" date="2006" name="Nature">
        <title>DNA sequence of human chromosome 17 and analysis of rearrangement in the human lineage.</title>
        <authorList>
            <person name="Zody M.C."/>
            <person name="Garber M."/>
            <person name="Adams D.J."/>
            <person name="Sharpe T."/>
            <person name="Harrow J."/>
            <person name="Lupski J.R."/>
            <person name="Nicholson C."/>
            <person name="Searle S.M."/>
            <person name="Wilming L."/>
            <person name="Young S.K."/>
            <person name="Abouelleil A."/>
            <person name="Allen N.R."/>
            <person name="Bi W."/>
            <person name="Bloom T."/>
            <person name="Borowsky M.L."/>
            <person name="Bugalter B.E."/>
            <person name="Butler J."/>
            <person name="Chang J.L."/>
            <person name="Chen C.-K."/>
            <person name="Cook A."/>
            <person name="Corum B."/>
            <person name="Cuomo C.A."/>
            <person name="de Jong P.J."/>
            <person name="DeCaprio D."/>
            <person name="Dewar K."/>
            <person name="FitzGerald M."/>
            <person name="Gilbert J."/>
            <person name="Gibson R."/>
            <person name="Gnerre S."/>
            <person name="Goldstein S."/>
            <person name="Grafham D.V."/>
            <person name="Grocock R."/>
            <person name="Hafez N."/>
            <person name="Hagopian D.S."/>
            <person name="Hart E."/>
            <person name="Norman C.H."/>
            <person name="Humphray S."/>
            <person name="Jaffe D.B."/>
            <person name="Jones M."/>
            <person name="Kamal M."/>
            <person name="Khodiyar V.K."/>
            <person name="LaButti K."/>
            <person name="Laird G."/>
            <person name="Lehoczky J."/>
            <person name="Liu X."/>
            <person name="Lokyitsang T."/>
            <person name="Loveland J."/>
            <person name="Lui A."/>
            <person name="Macdonald P."/>
            <person name="Major J.E."/>
            <person name="Matthews L."/>
            <person name="Mauceli E."/>
            <person name="McCarroll S.A."/>
            <person name="Mihalev A.H."/>
            <person name="Mudge J."/>
            <person name="Nguyen C."/>
            <person name="Nicol R."/>
            <person name="O'Leary S.B."/>
            <person name="Osoegawa K."/>
            <person name="Schwartz D.C."/>
            <person name="Shaw-Smith C."/>
            <person name="Stankiewicz P."/>
            <person name="Steward C."/>
            <person name="Swarbreck D."/>
            <person name="Venkataraman V."/>
            <person name="Whittaker C.A."/>
            <person name="Yang X."/>
            <person name="Zimmer A.R."/>
            <person name="Bradley A."/>
            <person name="Hubbard T."/>
            <person name="Birren B.W."/>
            <person name="Rogers J."/>
            <person name="Lander E.S."/>
            <person name="Nusbaum C."/>
        </authorList>
    </citation>
    <scope>NUCLEOTIDE SEQUENCE [LARGE SCALE GENOMIC DNA]</scope>
</reference>
<reference key="7">
    <citation type="submission" date="2005-09" db="EMBL/GenBank/DDBJ databases">
        <authorList>
            <person name="Mural R.J."/>
            <person name="Istrail S."/>
            <person name="Sutton G.G."/>
            <person name="Florea L."/>
            <person name="Halpern A.L."/>
            <person name="Mobarry C.M."/>
            <person name="Lippert R."/>
            <person name="Walenz B."/>
            <person name="Shatkay H."/>
            <person name="Dew I."/>
            <person name="Miller J.R."/>
            <person name="Flanigan M.J."/>
            <person name="Edwards N.J."/>
            <person name="Bolanos R."/>
            <person name="Fasulo D."/>
            <person name="Halldorsson B.V."/>
            <person name="Hannenhalli S."/>
            <person name="Turner R."/>
            <person name="Yooseph S."/>
            <person name="Lu F."/>
            <person name="Nusskern D.R."/>
            <person name="Shue B.C."/>
            <person name="Zheng X.H."/>
            <person name="Zhong F."/>
            <person name="Delcher A.L."/>
            <person name="Huson D.H."/>
            <person name="Kravitz S.A."/>
            <person name="Mouchard L."/>
            <person name="Reinert K."/>
            <person name="Remington K.A."/>
            <person name="Clark A.G."/>
            <person name="Waterman M.S."/>
            <person name="Eichler E.E."/>
            <person name="Adams M.D."/>
            <person name="Hunkapiller M.W."/>
            <person name="Myers E.W."/>
            <person name="Venter J.C."/>
        </authorList>
    </citation>
    <scope>NUCLEOTIDE SEQUENCE [LARGE SCALE GENOMIC DNA]</scope>
</reference>
<reference key="8">
    <citation type="journal article" date="2004" name="Genome Res.">
        <title>The status, quality, and expansion of the NIH full-length cDNA project: the Mammalian Gene Collection (MGC).</title>
        <authorList>
            <consortium name="The MGC Project Team"/>
        </authorList>
    </citation>
    <scope>NUCLEOTIDE SEQUENCE [LARGE SCALE MRNA] (ISOFORM LONG)</scope>
    <source>
        <tissue>Testis</tissue>
    </source>
</reference>
<reference key="9">
    <citation type="submission" date="2008-12" db="UniProtKB">
        <authorList>
            <person name="Bienvenut W.V."/>
            <person name="Lilla S."/>
            <person name="von Kriegsheim A."/>
            <person name="Lempens A."/>
            <person name="Kolch W."/>
        </authorList>
    </citation>
    <scope>PROTEIN SEQUENCE OF 75-101; 196-210; 284-306; 476-490 AND 563-576</scope>
    <scope>METHYLATION AT ARG-206; ARG-483 AND ARG-570</scope>
    <scope>IDENTIFICATION BY MASS SPECTROMETRY</scope>
    <source>
        <tissue>Ovarian carcinoma</tissue>
    </source>
</reference>
<reference key="10">
    <citation type="journal article" date="1998" name="J. Biol. Chem.">
        <title>The transcriptional repressor ZFM1 interacts with and modulates the ability of EWS to activate transcription.</title>
        <authorList>
            <person name="Zhang D."/>
            <person name="Paley A.J."/>
            <person name="Childs G."/>
        </authorList>
    </citation>
    <scope>INTERACTION WITH SF1</scope>
</reference>
<reference key="11">
    <citation type="journal article" date="1999" name="Oncogene">
        <title>Fusion of the RBP56 and CHN genes in extraskeletal myxoid chondrosarcomas with translocation t(9;17)(q22;q11).</title>
        <authorList>
            <person name="Panagopoulos I."/>
            <person name="Mencinger M."/>
            <person name="Dietrich C.U."/>
            <person name="Bjerkehagen B."/>
            <person name="Saeter G."/>
            <person name="Mertens F."/>
            <person name="Mandahl N."/>
            <person name="Heim S."/>
        </authorList>
    </citation>
    <scope>CHROMOSOMAL TRANSLOCATION WITH NR4A3</scope>
</reference>
<reference key="12">
    <citation type="journal article" date="2007" name="Science">
        <title>ATM and ATR substrate analysis reveals extensive protein networks responsive to DNA damage.</title>
        <authorList>
            <person name="Matsuoka S."/>
            <person name="Ballif B.A."/>
            <person name="Smogorzewska A."/>
            <person name="McDonald E.R. III"/>
            <person name="Hurov K.E."/>
            <person name="Luo J."/>
            <person name="Bakalarski C.E."/>
            <person name="Zhao Z."/>
            <person name="Solimini N."/>
            <person name="Lerenthal Y."/>
            <person name="Shiloh Y."/>
            <person name="Gygi S.P."/>
            <person name="Elledge S.J."/>
        </authorList>
    </citation>
    <scope>IDENTIFICATION BY MASS SPECTROMETRY [LARGE SCALE ANALYSIS]</scope>
    <source>
        <tissue>Embryonic kidney</tissue>
    </source>
</reference>
<reference key="13">
    <citation type="journal article" date="2008" name="Proc. Natl. Acad. Sci. U.S.A.">
        <title>A quantitative atlas of mitotic phosphorylation.</title>
        <authorList>
            <person name="Dephoure N."/>
            <person name="Zhou C."/>
            <person name="Villen J."/>
            <person name="Beausoleil S.A."/>
            <person name="Bakalarski C.E."/>
            <person name="Elledge S.J."/>
            <person name="Gygi S.P."/>
        </authorList>
    </citation>
    <scope>IDENTIFICATION BY MASS SPECTROMETRY [LARGE SCALE ANALYSIS]</scope>
    <source>
        <tissue>Cervix carcinoma</tissue>
    </source>
</reference>
<reference key="14">
    <citation type="journal article" date="2009" name="Exp. Cell Res.">
        <title>PRMT1 mediated methylation of TAF15 is required for its positive gene regulatory function.</title>
        <authorList>
            <person name="Jobert L."/>
            <person name="Argentini M."/>
            <person name="Tora L."/>
        </authorList>
    </citation>
    <scope>FUNCTION</scope>
    <scope>METHYLATION AT ARG-206; ARG-528; ARG-535 AND ARG-570 BY PRMT1</scope>
    <scope>IDENTIFICATION BY MASS SPECTROMETRY</scope>
    <scope>SUBCELLULAR LOCATION</scope>
</reference>
<reference key="15">
    <citation type="journal article" date="2009" name="Sci. Signal.">
        <title>Quantitative phosphoproteomic analysis of T cell receptor signaling reveals system-wide modulation of protein-protein interactions.</title>
        <authorList>
            <person name="Mayya V."/>
            <person name="Lundgren D.H."/>
            <person name="Hwang S.-I."/>
            <person name="Rezaul K."/>
            <person name="Wu L."/>
            <person name="Eng J.K."/>
            <person name="Rodionov V."/>
            <person name="Han D.K."/>
        </authorList>
    </citation>
    <scope>PHOSPHORYLATION [LARGE SCALE ANALYSIS] AT SER-226 AND SER-231</scope>
    <scope>IDENTIFICATION BY MASS SPECTROMETRY [LARGE SCALE ANALYSIS]</scope>
    <source>
        <tissue>Leukemic T-cell</tissue>
    </source>
</reference>
<reference key="16">
    <citation type="journal article" date="2009" name="Science">
        <title>Lysine acetylation targets protein complexes and co-regulates major cellular functions.</title>
        <authorList>
            <person name="Choudhary C."/>
            <person name="Kumar C."/>
            <person name="Gnad F."/>
            <person name="Nielsen M.L."/>
            <person name="Rehman M."/>
            <person name="Walther T.C."/>
            <person name="Olsen J.V."/>
            <person name="Mann M."/>
        </authorList>
    </citation>
    <scope>ACETYLATION [LARGE SCALE ANALYSIS] AT LYS-268</scope>
    <scope>IDENTIFICATION BY MASS SPECTROMETRY [LARGE SCALE ANALYSIS]</scope>
</reference>
<reference key="17">
    <citation type="journal article" date="2011" name="BMC Syst. Biol.">
        <title>Initial characterization of the human central proteome.</title>
        <authorList>
            <person name="Burkard T.R."/>
            <person name="Planyavsky M."/>
            <person name="Kaupe I."/>
            <person name="Breitwieser F.P."/>
            <person name="Buerckstuemmer T."/>
            <person name="Bennett K.L."/>
            <person name="Superti-Furga G."/>
            <person name="Colinge J."/>
        </authorList>
    </citation>
    <scope>IDENTIFICATION BY MASS SPECTROMETRY [LARGE SCALE ANALYSIS]</scope>
</reference>
<reference key="18">
    <citation type="journal article" date="2011" name="J. Mol. Biol.">
        <title>Characterization of a family of RanBP2-type zinc fingers that can recognize single-stranded RNA.</title>
        <authorList>
            <person name="Nguyen C.D."/>
            <person name="Mansfield R.E."/>
            <person name="Leung W."/>
            <person name="Vaz P.M."/>
            <person name="Loughlin F.E."/>
            <person name="Grant R.P."/>
            <person name="Mackay J.P."/>
        </authorList>
    </citation>
    <scope>FUNCTION</scope>
</reference>
<reference key="19">
    <citation type="journal article" date="2011" name="Sci. Signal.">
        <title>System-wide temporal characterization of the proteome and phosphoproteome of human embryonic stem cell differentiation.</title>
        <authorList>
            <person name="Rigbolt K.T."/>
            <person name="Prokhorova T.A."/>
            <person name="Akimov V."/>
            <person name="Henningsen J."/>
            <person name="Johansen P.T."/>
            <person name="Kratchmarova I."/>
            <person name="Kassem M."/>
            <person name="Mann M."/>
            <person name="Olsen J.V."/>
            <person name="Blagoev B."/>
        </authorList>
    </citation>
    <scope>PHOSPHORYLATION [LARGE SCALE ANALYSIS] AT SER-423; SER-438; SER-442; SER-451 AND SER-554</scope>
    <scope>IDENTIFICATION BY MASS SPECTROMETRY [LARGE SCALE ANALYSIS]</scope>
</reference>
<reference key="20">
    <citation type="journal article" date="2013" name="J. Proteome Res.">
        <title>Toward a comprehensive characterization of a human cancer cell phosphoproteome.</title>
        <authorList>
            <person name="Zhou H."/>
            <person name="Di Palma S."/>
            <person name="Preisinger C."/>
            <person name="Peng M."/>
            <person name="Polat A.N."/>
            <person name="Heck A.J."/>
            <person name="Mohammed S."/>
        </authorList>
    </citation>
    <scope>PHOSPHORYLATION [LARGE SCALE ANALYSIS] AT SER-433 AND SER-438</scope>
    <scope>IDENTIFICATION BY MASS SPECTROMETRY [LARGE SCALE ANALYSIS]</scope>
    <source>
        <tissue>Cervix carcinoma</tissue>
        <tissue>Erythroleukemia</tissue>
    </source>
</reference>
<reference key="21">
    <citation type="journal article" date="2013" name="Mol. Cell">
        <title>Proteome-wide identification of poly(ADP-Ribosyl)ation targets in different genotoxic stress responses.</title>
        <authorList>
            <person name="Jungmichel S."/>
            <person name="Rosenthal F."/>
            <person name="Altmeyer M."/>
            <person name="Lukas J."/>
            <person name="Hottiger M.O."/>
            <person name="Nielsen M.L."/>
        </authorList>
    </citation>
    <scope>ADP-RIBOSYLATION</scope>
</reference>
<reference key="22">
    <citation type="journal article" date="2014" name="J. Proteomics">
        <title>An enzyme assisted RP-RPLC approach for in-depth analysis of human liver phosphoproteome.</title>
        <authorList>
            <person name="Bian Y."/>
            <person name="Song C."/>
            <person name="Cheng K."/>
            <person name="Dong M."/>
            <person name="Wang F."/>
            <person name="Huang J."/>
            <person name="Sun D."/>
            <person name="Wang L."/>
            <person name="Ye M."/>
            <person name="Zou H."/>
        </authorList>
    </citation>
    <scope>PHOSPHORYLATION [LARGE SCALE ANALYSIS] AT SER-375</scope>
    <scope>IDENTIFICATION BY MASS SPECTROMETRY [LARGE SCALE ANALYSIS]</scope>
    <source>
        <tissue>Liver</tissue>
    </source>
</reference>
<reference key="23">
    <citation type="journal article" date="2014" name="Mol. Cell. Proteomics">
        <title>Immunoaffinity enrichment and mass spectrometry analysis of protein methylation.</title>
        <authorList>
            <person name="Guo A."/>
            <person name="Gu H."/>
            <person name="Zhou J."/>
            <person name="Mulhern D."/>
            <person name="Wang Y."/>
            <person name="Lee K.A."/>
            <person name="Yang V."/>
            <person name="Aguiar M."/>
            <person name="Kornhauser J."/>
            <person name="Jia X."/>
            <person name="Ren J."/>
            <person name="Beausoleil S.A."/>
            <person name="Silva J.C."/>
            <person name="Vemulapalli V."/>
            <person name="Bedford M.T."/>
            <person name="Comb M.J."/>
        </authorList>
    </citation>
    <scope>METHYLATION [LARGE SCALE ANALYSIS] AT ARG-206; ARG-431; ARG-459; ARG-475 AND ARG-562</scope>
    <scope>IDENTIFICATION BY MASS SPECTROMETRY [LARGE SCALE ANALYSIS]</scope>
    <source>
        <tissue>Colon carcinoma</tissue>
    </source>
</reference>
<reference key="24">
    <citation type="journal article" date="2017" name="Nat. Struct. Mol. Biol.">
        <title>Site-specific mapping of the human SUMO proteome reveals co-modification with phosphorylation.</title>
        <authorList>
            <person name="Hendriks I.A."/>
            <person name="Lyon D."/>
            <person name="Young C."/>
            <person name="Jensen L.J."/>
            <person name="Vertegaal A.C."/>
            <person name="Nielsen M.L."/>
        </authorList>
    </citation>
    <scope>SUMOYLATION [LARGE SCALE ANALYSIS] AT LYS-265 AND LYS-268</scope>
    <scope>IDENTIFICATION BY MASS SPECTROMETRY [LARGE SCALE ANALYSIS]</scope>
</reference>
<name>RBP56_HUMAN</name>
<evidence type="ECO:0000255" key="1">
    <source>
        <dbReference type="PROSITE-ProRule" id="PRU00176"/>
    </source>
</evidence>
<evidence type="ECO:0000255" key="2">
    <source>
        <dbReference type="PROSITE-ProRule" id="PRU00322"/>
    </source>
</evidence>
<evidence type="ECO:0000256" key="3">
    <source>
        <dbReference type="SAM" id="MobiDB-lite"/>
    </source>
</evidence>
<evidence type="ECO:0000269" key="4">
    <source>
    </source>
</evidence>
<evidence type="ECO:0000269" key="5">
    <source>
    </source>
</evidence>
<evidence type="ECO:0000269" key="6">
    <source>
    </source>
</evidence>
<evidence type="ECO:0000269" key="7">
    <source ref="9"/>
</evidence>
<evidence type="ECO:0000303" key="8">
    <source>
    </source>
</evidence>
<evidence type="ECO:0000303" key="9">
    <source>
    </source>
</evidence>
<evidence type="ECO:0000303" key="10">
    <source>
    </source>
</evidence>
<evidence type="ECO:0000305" key="11"/>
<evidence type="ECO:0007744" key="12">
    <source>
    </source>
</evidence>
<evidence type="ECO:0007744" key="13">
    <source>
    </source>
</evidence>
<evidence type="ECO:0007744" key="14">
    <source>
    </source>
</evidence>
<evidence type="ECO:0007744" key="15">
    <source>
    </source>
</evidence>
<evidence type="ECO:0007744" key="16">
    <source>
    </source>
</evidence>
<evidence type="ECO:0007744" key="17">
    <source>
    </source>
</evidence>
<evidence type="ECO:0007744" key="18">
    <source>
    </source>
</evidence>
<evidence type="ECO:0007829" key="19">
    <source>
        <dbReference type="PDB" id="2MMY"/>
    </source>
</evidence>
<evidence type="ECO:0007829" key="20">
    <source>
        <dbReference type="PDB" id="8ONS"/>
    </source>
</evidence>
<protein>
    <recommendedName>
        <fullName>TATA-binding protein-associated factor 2N</fullName>
    </recommendedName>
    <alternativeName>
        <fullName>68 kDa TATA-binding protein-associated factor</fullName>
        <shortName>TAF(II)68</shortName>
        <shortName>TAFII68</shortName>
    </alternativeName>
    <alternativeName>
        <fullName>RNA-binding protein 56</fullName>
    </alternativeName>
</protein>
<feature type="chain" id="PRO_0000081749" description="TATA-binding protein-associated factor 2N">
    <location>
        <begin position="1"/>
        <end position="592"/>
    </location>
</feature>
<feature type="domain" description="RRM" evidence="1">
    <location>
        <begin position="234"/>
        <end position="320"/>
    </location>
</feature>
<feature type="repeat" description="1">
    <location>
        <begin position="407"/>
        <end position="413"/>
    </location>
</feature>
<feature type="repeat" description="2">
    <location>
        <begin position="414"/>
        <end position="420"/>
    </location>
</feature>
<feature type="repeat" description="3">
    <location>
        <begin position="421"/>
        <end position="429"/>
    </location>
</feature>
<feature type="repeat" description="4">
    <location>
        <begin position="430"/>
        <end position="439"/>
    </location>
</feature>
<feature type="repeat" description="5">
    <location>
        <begin position="440"/>
        <end position="448"/>
    </location>
</feature>
<feature type="repeat" description="6">
    <location>
        <begin position="449"/>
        <end position="457"/>
    </location>
</feature>
<feature type="repeat" description="7">
    <location>
        <begin position="458"/>
        <end position="465"/>
    </location>
</feature>
<feature type="repeat" description="8">
    <location>
        <begin position="466"/>
        <end position="473"/>
    </location>
</feature>
<feature type="repeat" description="9">
    <location>
        <begin position="474"/>
        <end position="481"/>
    </location>
</feature>
<feature type="repeat" description="10">
    <location>
        <begin position="482"/>
        <end position="488"/>
    </location>
</feature>
<feature type="repeat" description="11">
    <location>
        <begin position="489"/>
        <end position="496"/>
    </location>
</feature>
<feature type="repeat" description="12">
    <location>
        <begin position="497"/>
        <end position="503"/>
    </location>
</feature>
<feature type="repeat" description="13">
    <location>
        <begin position="504"/>
        <end position="510"/>
    </location>
</feature>
<feature type="repeat" description="14">
    <location>
        <begin position="511"/>
        <end position="517"/>
    </location>
</feature>
<feature type="repeat" description="15">
    <location>
        <begin position="518"/>
        <end position="524"/>
    </location>
</feature>
<feature type="repeat" description="16">
    <location>
        <begin position="525"/>
        <end position="533"/>
    </location>
</feature>
<feature type="repeat" description="17">
    <location>
        <begin position="534"/>
        <end position="543"/>
    </location>
</feature>
<feature type="repeat" description="18">
    <location>
        <begin position="544"/>
        <end position="551"/>
    </location>
</feature>
<feature type="repeat" description="19">
    <location>
        <begin position="552"/>
        <end position="560"/>
    </location>
</feature>
<feature type="repeat" description="20">
    <location>
        <begin position="561"/>
        <end position="568"/>
    </location>
</feature>
<feature type="repeat" description="21">
    <location>
        <begin position="569"/>
        <end position="575"/>
    </location>
</feature>
<feature type="zinc finger region" description="RanBP2-type" evidence="2">
    <location>
        <begin position="354"/>
        <end position="385"/>
    </location>
</feature>
<feature type="region of interest" description="Disordered" evidence="3">
    <location>
        <begin position="1"/>
        <end position="237"/>
    </location>
</feature>
<feature type="region of interest" description="Disordered" evidence="3">
    <location>
        <begin position="324"/>
        <end position="356"/>
    </location>
</feature>
<feature type="region of interest" description="Disordered" evidence="3">
    <location>
        <begin position="373"/>
        <end position="592"/>
    </location>
</feature>
<feature type="region of interest" description="21 X approximate tandem repeats of D-R-[S,G](0,3)-G-G-Y-G-G">
    <location>
        <begin position="407"/>
        <end position="575"/>
    </location>
</feature>
<feature type="compositionally biased region" description="Low complexity" evidence="3">
    <location>
        <begin position="1"/>
        <end position="21"/>
    </location>
</feature>
<feature type="compositionally biased region" description="Low complexity" evidence="3">
    <location>
        <begin position="28"/>
        <end position="91"/>
    </location>
</feature>
<feature type="compositionally biased region" description="Low complexity" evidence="3">
    <location>
        <begin position="104"/>
        <end position="129"/>
    </location>
</feature>
<feature type="compositionally biased region" description="Low complexity" evidence="3">
    <location>
        <begin position="140"/>
        <end position="150"/>
    </location>
</feature>
<feature type="compositionally biased region" description="Basic and acidic residues" evidence="3">
    <location>
        <begin position="151"/>
        <end position="175"/>
    </location>
</feature>
<feature type="compositionally biased region" description="Gly residues" evidence="3">
    <location>
        <begin position="176"/>
        <end position="187"/>
    </location>
</feature>
<feature type="compositionally biased region" description="Basic and acidic residues" evidence="3">
    <location>
        <begin position="214"/>
        <end position="224"/>
    </location>
</feature>
<feature type="compositionally biased region" description="Gly residues" evidence="3">
    <location>
        <begin position="341"/>
        <end position="350"/>
    </location>
</feature>
<feature type="compositionally biased region" description="Gly residues" evidence="3">
    <location>
        <begin position="415"/>
        <end position="578"/>
    </location>
</feature>
<feature type="compositionally biased region" description="Basic and acidic residues" evidence="3">
    <location>
        <begin position="579"/>
        <end position="592"/>
    </location>
</feature>
<feature type="modified residue" description="Asymmetric dimethylarginine; by PRMT1; alternate" evidence="5 7">
    <location>
        <position position="206"/>
    </location>
</feature>
<feature type="modified residue" description="Omega-N-methylarginine; alternate" evidence="16">
    <location>
        <position position="206"/>
    </location>
</feature>
<feature type="modified residue" description="Phosphoserine" evidence="13">
    <location>
        <position position="226"/>
    </location>
</feature>
<feature type="modified residue" description="Phosphoserine" evidence="13">
    <location>
        <position position="231"/>
    </location>
</feature>
<feature type="modified residue" description="N6-acetyllysine; alternate" evidence="12">
    <location>
        <position position="268"/>
    </location>
</feature>
<feature type="modified residue" description="Phosphoserine" evidence="17">
    <location>
        <position position="375"/>
    </location>
</feature>
<feature type="modified residue" description="Phosphoserine" evidence="14">
    <location>
        <position position="423"/>
    </location>
</feature>
<feature type="modified residue" description="Omega-N-methylarginine" evidence="16">
    <location>
        <position position="431"/>
    </location>
</feature>
<feature type="modified residue" description="Phosphoserine" evidence="15">
    <location>
        <position position="433"/>
    </location>
</feature>
<feature type="modified residue" description="Phosphoserine" evidence="14 15">
    <location>
        <position position="438"/>
    </location>
</feature>
<feature type="modified residue" description="Phosphoserine" evidence="14">
    <location>
        <position position="442"/>
    </location>
</feature>
<feature type="modified residue" description="Phosphoserine" evidence="14">
    <location>
        <position position="451"/>
    </location>
</feature>
<feature type="modified residue" description="Omega-N-methylarginine" evidence="16">
    <location>
        <position position="459"/>
    </location>
</feature>
<feature type="modified residue" description="Omega-N-methylarginine" evidence="16">
    <location>
        <position position="475"/>
    </location>
</feature>
<feature type="modified residue" description="Dimethylated arginine" evidence="7">
    <location>
        <position position="483"/>
    </location>
</feature>
<feature type="modified residue" description="Asymmetric dimethylarginine; by PRMT1" evidence="5">
    <location>
        <position position="528"/>
    </location>
</feature>
<feature type="modified residue" description="Asymmetric dimethylarginine; by PRMT1" evidence="5">
    <location>
        <position position="535"/>
    </location>
</feature>
<feature type="modified residue" description="Phosphoserine" evidence="14">
    <location>
        <position position="554"/>
    </location>
</feature>
<feature type="modified residue" description="Omega-N-methylarginine" evidence="16">
    <location>
        <position position="562"/>
    </location>
</feature>
<feature type="modified residue" description="Asymmetric dimethylarginine" evidence="5 7">
    <location>
        <position position="570"/>
    </location>
</feature>
<feature type="modified residue" description="Asymmetric dimethylarginine; by PRMT1" evidence="5 7">
    <location>
        <position position="570"/>
    </location>
</feature>
<feature type="cross-link" description="Glycyl lysine isopeptide (Lys-Gly) (interchain with G-Cter in SUMO2)" evidence="18">
    <location>
        <position position="265"/>
    </location>
</feature>
<feature type="cross-link" description="Glycyl lysine isopeptide (Lys-Gly) (interchain with G-Cter in SUMO2); alternate" evidence="18">
    <location>
        <position position="268"/>
    </location>
</feature>
<feature type="splice variant" id="VSP_005806" description="In isoform Short." evidence="8 9 10">
    <location>
        <begin position="60"/>
        <end position="62"/>
    </location>
</feature>
<feature type="strand" evidence="20">
    <location>
        <begin position="13"/>
        <end position="21"/>
    </location>
</feature>
<feature type="strand" evidence="20">
    <location>
        <begin position="31"/>
        <end position="35"/>
    </location>
</feature>
<feature type="strand" evidence="20">
    <location>
        <begin position="40"/>
        <end position="43"/>
    </location>
</feature>
<feature type="strand" evidence="20">
    <location>
        <begin position="45"/>
        <end position="55"/>
    </location>
</feature>
<feature type="strand" evidence="20">
    <location>
        <begin position="60"/>
        <end position="66"/>
    </location>
</feature>
<feature type="strand" evidence="20">
    <location>
        <begin position="70"/>
        <end position="75"/>
    </location>
</feature>
<feature type="strand" evidence="20">
    <location>
        <begin position="77"/>
        <end position="81"/>
    </location>
</feature>
<feature type="strand" evidence="20">
    <location>
        <begin position="83"/>
        <end position="85"/>
    </location>
</feature>
<feature type="strand" evidence="20">
    <location>
        <begin position="88"/>
        <end position="94"/>
    </location>
</feature>
<feature type="strand" evidence="20">
    <location>
        <begin position="96"/>
        <end position="98"/>
    </location>
</feature>
<feature type="strand" evidence="19">
    <location>
        <begin position="236"/>
        <end position="240"/>
    </location>
</feature>
<feature type="helix" evidence="19">
    <location>
        <begin position="250"/>
        <end position="255"/>
    </location>
</feature>
<feature type="turn" evidence="19">
    <location>
        <begin position="264"/>
        <end position="266"/>
    </location>
</feature>
<feature type="strand" evidence="19">
    <location>
        <begin position="272"/>
        <end position="274"/>
    </location>
</feature>
<feature type="turn" evidence="19">
    <location>
        <begin position="277"/>
        <end position="279"/>
    </location>
</feature>
<feature type="strand" evidence="19">
    <location>
        <begin position="285"/>
        <end position="288"/>
    </location>
</feature>
<feature type="helix" evidence="19">
    <location>
        <begin position="293"/>
        <end position="301"/>
    </location>
</feature>
<feature type="strand" evidence="19">
    <location>
        <begin position="304"/>
        <end position="308"/>
    </location>
</feature>
<feature type="strand" evidence="19">
    <location>
        <begin position="314"/>
        <end position="316"/>
    </location>
</feature>
<dbReference type="EMBL" id="U51334">
    <property type="protein sequence ID" value="AAC50932.1"/>
    <property type="molecule type" value="mRNA"/>
</dbReference>
<dbReference type="EMBL" id="X98893">
    <property type="protein sequence ID" value="CAA67398.1"/>
    <property type="molecule type" value="mRNA"/>
</dbReference>
<dbReference type="EMBL" id="AB010067">
    <property type="protein sequence ID" value="BAA33811.1"/>
    <property type="molecule type" value="Genomic_DNA"/>
</dbReference>
<dbReference type="EMBL" id="AB010067">
    <property type="protein sequence ID" value="BAA33812.1"/>
    <property type="molecule type" value="Genomic_DNA"/>
</dbReference>
<dbReference type="EMBL" id="AY197697">
    <property type="protein sequence ID" value="AAO13485.1"/>
    <property type="molecule type" value="Genomic_DNA"/>
</dbReference>
<dbReference type="EMBL" id="AK313223">
    <property type="protein sequence ID" value="BAG36034.1"/>
    <property type="molecule type" value="mRNA"/>
</dbReference>
<dbReference type="EMBL" id="AK314194">
    <property type="protein sequence ID" value="BAG36873.1"/>
    <property type="molecule type" value="mRNA"/>
</dbReference>
<dbReference type="EMBL" id="AC015849">
    <property type="status" value="NOT_ANNOTATED_CDS"/>
    <property type="molecule type" value="Genomic_DNA"/>
</dbReference>
<dbReference type="EMBL" id="CH471147">
    <property type="protein sequence ID" value="EAW80124.1"/>
    <property type="molecule type" value="Genomic_DNA"/>
</dbReference>
<dbReference type="EMBL" id="CH471147">
    <property type="protein sequence ID" value="EAW80125.1"/>
    <property type="molecule type" value="Genomic_DNA"/>
</dbReference>
<dbReference type="EMBL" id="BC046099">
    <property type="protein sequence ID" value="AAH46099.2"/>
    <property type="molecule type" value="mRNA"/>
</dbReference>
<dbReference type="CCDS" id="CCDS32623.1">
    <molecule id="Q92804-1"/>
</dbReference>
<dbReference type="CCDS" id="CCDS59279.1">
    <molecule id="Q92804-2"/>
</dbReference>
<dbReference type="PIR" id="S71954">
    <property type="entry name" value="S71954"/>
</dbReference>
<dbReference type="RefSeq" id="NP_003478.1">
    <molecule id="Q92804-2"/>
    <property type="nucleotide sequence ID" value="NM_003487.4"/>
</dbReference>
<dbReference type="RefSeq" id="NP_631961.1">
    <molecule id="Q92804-1"/>
    <property type="nucleotide sequence ID" value="NM_139215.3"/>
</dbReference>
<dbReference type="PDB" id="2MMY">
    <property type="method" value="NMR"/>
    <property type="chains" value="A=231-323"/>
</dbReference>
<dbReference type="PDB" id="8ONS">
    <property type="method" value="EM"/>
    <property type="resolution" value="1.97 A"/>
    <property type="chains" value="A/C/E/G/I=1-592"/>
</dbReference>
<dbReference type="PDBsum" id="2MMY"/>
<dbReference type="PDBsum" id="8ONS"/>
<dbReference type="BMRB" id="Q92804"/>
<dbReference type="EMDB" id="EMD-16999"/>
<dbReference type="EMDB" id="EMD-17022"/>
<dbReference type="SMR" id="Q92804"/>
<dbReference type="BioGRID" id="113807">
    <property type="interactions" value="405"/>
</dbReference>
<dbReference type="CORUM" id="Q92804"/>
<dbReference type="DIP" id="DIP-52760N"/>
<dbReference type="FunCoup" id="Q92804">
    <property type="interactions" value="2800"/>
</dbReference>
<dbReference type="IntAct" id="Q92804">
    <property type="interactions" value="404"/>
</dbReference>
<dbReference type="MINT" id="Q92804"/>
<dbReference type="STRING" id="9606.ENSP00000474096"/>
<dbReference type="GlyGen" id="Q92804">
    <property type="glycosylation" value="1 site, 1 O-linked glycan (1 site)"/>
</dbReference>
<dbReference type="iPTMnet" id="Q92804"/>
<dbReference type="PhosphoSitePlus" id="Q92804"/>
<dbReference type="SwissPalm" id="Q92804"/>
<dbReference type="BioMuta" id="TAF15"/>
<dbReference type="DMDM" id="8928305"/>
<dbReference type="jPOST" id="Q92804"/>
<dbReference type="MassIVE" id="Q92804"/>
<dbReference type="PaxDb" id="9606-ENSP00000474096"/>
<dbReference type="PeptideAtlas" id="Q92804"/>
<dbReference type="ProteomicsDB" id="75488">
    <molecule id="Q92804-1"/>
</dbReference>
<dbReference type="ProteomicsDB" id="75489">
    <molecule id="Q92804-2"/>
</dbReference>
<dbReference type="Pumba" id="Q92804"/>
<dbReference type="Antibodypedia" id="74808">
    <property type="antibodies" value="326 antibodies from 35 providers"/>
</dbReference>
<dbReference type="DNASU" id="8148"/>
<dbReference type="YCharOS" id="Q92804">
    <property type="antibodies" value="Tested 6 antibodies from 4 manufacturers"/>
</dbReference>
<dbReference type="Ensembl" id="ENST00000604841.5">
    <molecule id="Q92804-2"/>
    <property type="protein sequence ID" value="ENSP00000474609.1"/>
    <property type="gene ID" value="ENSG00000270647.7"/>
</dbReference>
<dbReference type="Ensembl" id="ENST00000605844.6">
    <molecule id="Q92804-1"/>
    <property type="protein sequence ID" value="ENSP00000474096.1"/>
    <property type="gene ID" value="ENSG00000270647.7"/>
</dbReference>
<dbReference type="Ensembl" id="ENST00000617382.2">
    <molecule id="Q92804-1"/>
    <property type="protein sequence ID" value="ENSP00000480040.1"/>
    <property type="gene ID" value="ENSG00000276833.2"/>
</dbReference>
<dbReference type="Ensembl" id="ENST00000631482.1">
    <molecule id="Q92804-2"/>
    <property type="protein sequence ID" value="ENSP00000488684.1"/>
    <property type="gene ID" value="ENSG00000276833.2"/>
</dbReference>
<dbReference type="GeneID" id="8148"/>
<dbReference type="KEGG" id="hsa:8148"/>
<dbReference type="MANE-Select" id="ENST00000605844.6">
    <property type="protein sequence ID" value="ENSP00000474096.1"/>
    <property type="RefSeq nucleotide sequence ID" value="NM_139215.3"/>
    <property type="RefSeq protein sequence ID" value="NP_631961.1"/>
</dbReference>
<dbReference type="UCSC" id="uc002hkc.5">
    <molecule id="Q92804-1"/>
    <property type="organism name" value="human"/>
</dbReference>
<dbReference type="AGR" id="HGNC:11547"/>
<dbReference type="CTD" id="8148"/>
<dbReference type="DisGeNET" id="8148"/>
<dbReference type="GeneCards" id="TAF15"/>
<dbReference type="HGNC" id="HGNC:11547">
    <property type="gene designation" value="TAF15"/>
</dbReference>
<dbReference type="HPA" id="ENSG00000270647">
    <property type="expression patterns" value="Low tissue specificity"/>
</dbReference>
<dbReference type="MalaCards" id="TAF15"/>
<dbReference type="MIM" id="601574">
    <property type="type" value="gene"/>
</dbReference>
<dbReference type="neXtProt" id="NX_Q92804"/>
<dbReference type="OpenTargets" id="ENSG00000270647"/>
<dbReference type="Orphanet" id="803">
    <property type="disease" value="Amyotrophic lateral sclerosis"/>
</dbReference>
<dbReference type="Orphanet" id="209916">
    <property type="disease" value="Extraskeletal myxoid chondrosarcoma"/>
</dbReference>
<dbReference type="PharmGKB" id="PA36322"/>
<dbReference type="VEuPathDB" id="HostDB:ENSG00000270647"/>
<dbReference type="eggNOG" id="KOG1995">
    <property type="taxonomic scope" value="Eukaryota"/>
</dbReference>
<dbReference type="GeneTree" id="ENSGT00940000156438"/>
<dbReference type="HOGENOM" id="CLU_025609_2_2_1"/>
<dbReference type="InParanoid" id="Q92804"/>
<dbReference type="OMA" id="NYHGNYG"/>
<dbReference type="OrthoDB" id="76445at2759"/>
<dbReference type="PAN-GO" id="Q92804">
    <property type="GO annotations" value="3 GO annotations based on evolutionary models"/>
</dbReference>
<dbReference type="PhylomeDB" id="Q92804"/>
<dbReference type="PathwayCommons" id="Q92804"/>
<dbReference type="Reactome" id="R-HSA-167161">
    <property type="pathway name" value="HIV Transcription Initiation"/>
</dbReference>
<dbReference type="Reactome" id="R-HSA-167162">
    <property type="pathway name" value="RNA Polymerase II HIV Promoter Escape"/>
</dbReference>
<dbReference type="Reactome" id="R-HSA-167172">
    <property type="pathway name" value="Transcription of the HIV genome"/>
</dbReference>
<dbReference type="Reactome" id="R-HSA-674695">
    <property type="pathway name" value="RNA Polymerase II Pre-transcription Events"/>
</dbReference>
<dbReference type="Reactome" id="R-HSA-6804756">
    <property type="pathway name" value="Regulation of TP53 Activity through Phosphorylation"/>
</dbReference>
<dbReference type="Reactome" id="R-HSA-73776">
    <property type="pathway name" value="RNA Polymerase II Promoter Escape"/>
</dbReference>
<dbReference type="Reactome" id="R-HSA-73779">
    <property type="pathway name" value="RNA Polymerase II Transcription Pre-Initiation And Promoter Opening"/>
</dbReference>
<dbReference type="Reactome" id="R-HSA-75953">
    <property type="pathway name" value="RNA Polymerase II Transcription Initiation"/>
</dbReference>
<dbReference type="Reactome" id="R-HSA-76042">
    <property type="pathway name" value="RNA Polymerase II Transcription Initiation And Promoter Clearance"/>
</dbReference>
<dbReference type="SignaLink" id="Q92804"/>
<dbReference type="SIGNOR" id="Q92804"/>
<dbReference type="BioGRID-ORCS" id="8148">
    <property type="hits" value="37 hits in 1164 CRISPR screens"/>
</dbReference>
<dbReference type="CD-CODE" id="1A18FFC4">
    <property type="entry name" value="Paraspeckle"/>
</dbReference>
<dbReference type="CD-CODE" id="232F8A39">
    <property type="entry name" value="P-body"/>
</dbReference>
<dbReference type="CD-CODE" id="38EC0B30">
    <property type="entry name" value="Transcriptional condensate"/>
</dbReference>
<dbReference type="CD-CODE" id="462A97B5">
    <property type="entry name" value="Leucocyte nuclear body"/>
</dbReference>
<dbReference type="CD-CODE" id="58F5AC37">
    <property type="entry name" value="Synthetic Condensate 000283"/>
</dbReference>
<dbReference type="CD-CODE" id="89D22CC2">
    <property type="entry name" value="Synthetic Condensate 000270"/>
</dbReference>
<dbReference type="CD-CODE" id="91857CE7">
    <property type="entry name" value="Nucleolus"/>
</dbReference>
<dbReference type="CD-CODE" id="D8E9712B">
    <property type="entry name" value="Neuronal RNP granule"/>
</dbReference>
<dbReference type="CD-CODE" id="D936E305">
    <property type="entry name" value="Synthetic Condensate 000298"/>
</dbReference>
<dbReference type="CD-CODE" id="DEE660B4">
    <property type="entry name" value="Stress granule"/>
</dbReference>
<dbReference type="CD-CODE" id="E6406A9A">
    <property type="entry name" value="Synthetic Condensate 000356"/>
</dbReference>
<dbReference type="CD-CODE" id="EBDFEA1F">
    <property type="entry name" value="Synthetic Condensate 000296"/>
</dbReference>
<dbReference type="ChiTaRS" id="TAF15">
    <property type="organism name" value="human"/>
</dbReference>
<dbReference type="EvolutionaryTrace" id="Q92804"/>
<dbReference type="GeneWiki" id="TAF15"/>
<dbReference type="GenomeRNAi" id="8148"/>
<dbReference type="Pharos" id="Q92804">
    <property type="development level" value="Tbio"/>
</dbReference>
<dbReference type="PRO" id="PR:Q92804"/>
<dbReference type="Proteomes" id="UP000005640">
    <property type="component" value="Chromosome 17"/>
</dbReference>
<dbReference type="RNAct" id="Q92804">
    <property type="molecule type" value="protein"/>
</dbReference>
<dbReference type="Bgee" id="ENSG00000270647">
    <property type="expression patterns" value="Expressed in endometrium and 103 other cell types or tissues"/>
</dbReference>
<dbReference type="ExpressionAtlas" id="Q92804">
    <property type="expression patterns" value="baseline and differential"/>
</dbReference>
<dbReference type="GO" id="GO:0005737">
    <property type="term" value="C:cytoplasm"/>
    <property type="evidence" value="ECO:0000314"/>
    <property type="project" value="UniProtKB"/>
</dbReference>
<dbReference type="GO" id="GO:0005654">
    <property type="term" value="C:nucleoplasm"/>
    <property type="evidence" value="ECO:0000314"/>
    <property type="project" value="HPA"/>
</dbReference>
<dbReference type="GO" id="GO:0005634">
    <property type="term" value="C:nucleus"/>
    <property type="evidence" value="ECO:0000314"/>
    <property type="project" value="UniProtKB"/>
</dbReference>
<dbReference type="GO" id="GO:0003677">
    <property type="term" value="F:DNA binding"/>
    <property type="evidence" value="ECO:0007669"/>
    <property type="project" value="UniProtKB-KW"/>
</dbReference>
<dbReference type="GO" id="GO:0003730">
    <property type="term" value="F:mRNA 3'-UTR binding"/>
    <property type="evidence" value="ECO:0007669"/>
    <property type="project" value="Ensembl"/>
</dbReference>
<dbReference type="GO" id="GO:0003723">
    <property type="term" value="F:RNA binding"/>
    <property type="evidence" value="ECO:0000314"/>
    <property type="project" value="MGI"/>
</dbReference>
<dbReference type="GO" id="GO:0003712">
    <property type="term" value="F:transcription coregulator activity"/>
    <property type="evidence" value="ECO:0000318"/>
    <property type="project" value="GO_Central"/>
</dbReference>
<dbReference type="GO" id="GO:0008270">
    <property type="term" value="F:zinc ion binding"/>
    <property type="evidence" value="ECO:0007669"/>
    <property type="project" value="UniProtKB-KW"/>
</dbReference>
<dbReference type="GO" id="GO:0048255">
    <property type="term" value="P:mRNA stabilization"/>
    <property type="evidence" value="ECO:0000314"/>
    <property type="project" value="MGI"/>
</dbReference>
<dbReference type="GO" id="GO:0045893">
    <property type="term" value="P:positive regulation of DNA-templated transcription"/>
    <property type="evidence" value="ECO:0000304"/>
    <property type="project" value="UniProtKB"/>
</dbReference>
<dbReference type="GO" id="GO:0008380">
    <property type="term" value="P:RNA splicing"/>
    <property type="evidence" value="ECO:0007669"/>
    <property type="project" value="Ensembl"/>
</dbReference>
<dbReference type="CDD" id="cd12535">
    <property type="entry name" value="RRM_FUS_TAF15"/>
    <property type="match status" value="1"/>
</dbReference>
<dbReference type="DisProt" id="DP02345"/>
<dbReference type="FunFam" id="3.30.70.330:FF:000246">
    <property type="entry name" value="TATA-binding protein-associated factor 2N isoform X1"/>
    <property type="match status" value="1"/>
</dbReference>
<dbReference type="FunFam" id="4.10.1060.10:FF:000008">
    <property type="entry name" value="TATA-binding protein-associated factor 2N isoform X1"/>
    <property type="match status" value="1"/>
</dbReference>
<dbReference type="Gene3D" id="3.30.70.330">
    <property type="match status" value="1"/>
</dbReference>
<dbReference type="Gene3D" id="4.10.1060.10">
    <property type="entry name" value="Zinc finger, RanBP2-type"/>
    <property type="match status" value="1"/>
</dbReference>
<dbReference type="IDEAL" id="IID00732"/>
<dbReference type="InterPro" id="IPR012677">
    <property type="entry name" value="Nucleotide-bd_a/b_plait_sf"/>
</dbReference>
<dbReference type="InterPro" id="IPR035979">
    <property type="entry name" value="RBD_domain_sf"/>
</dbReference>
<dbReference type="InterPro" id="IPR000504">
    <property type="entry name" value="RRM_dom"/>
</dbReference>
<dbReference type="InterPro" id="IPR034870">
    <property type="entry name" value="TET_fam"/>
</dbReference>
<dbReference type="InterPro" id="IPR001876">
    <property type="entry name" value="Znf_RanBP2"/>
</dbReference>
<dbReference type="InterPro" id="IPR036443">
    <property type="entry name" value="Znf_RanBP2_sf"/>
</dbReference>
<dbReference type="PANTHER" id="PTHR23238">
    <property type="entry name" value="RNA BINDING PROTEIN"/>
    <property type="match status" value="1"/>
</dbReference>
<dbReference type="Pfam" id="PF00076">
    <property type="entry name" value="RRM_1"/>
    <property type="match status" value="1"/>
</dbReference>
<dbReference type="SMART" id="SM00360">
    <property type="entry name" value="RRM"/>
    <property type="match status" value="1"/>
</dbReference>
<dbReference type="SMART" id="SM00547">
    <property type="entry name" value="ZnF_RBZ"/>
    <property type="match status" value="1"/>
</dbReference>
<dbReference type="SUPFAM" id="SSF90209">
    <property type="entry name" value="Ran binding protein zinc finger-like"/>
    <property type="match status" value="1"/>
</dbReference>
<dbReference type="SUPFAM" id="SSF54928">
    <property type="entry name" value="RNA-binding domain, RBD"/>
    <property type="match status" value="1"/>
</dbReference>
<dbReference type="PROSITE" id="PS50102">
    <property type="entry name" value="RRM"/>
    <property type="match status" value="1"/>
</dbReference>
<dbReference type="PROSITE" id="PS01358">
    <property type="entry name" value="ZF_RANBP2_1"/>
    <property type="match status" value="1"/>
</dbReference>
<dbReference type="PROSITE" id="PS50199">
    <property type="entry name" value="ZF_RANBP2_2"/>
    <property type="match status" value="1"/>
</dbReference>
<accession>Q92804</accession>
<accession>B2R837</accession>
<accession>Q86X94</accession>
<accession>Q92751</accession>
<proteinExistence type="evidence at protein level"/>
<keyword id="KW-0002">3D-structure</keyword>
<keyword id="KW-0007">Acetylation</keyword>
<keyword id="KW-0013">ADP-ribosylation</keyword>
<keyword id="KW-0025">Alternative splicing</keyword>
<keyword id="KW-0160">Chromosomal rearrangement</keyword>
<keyword id="KW-0963">Cytoplasm</keyword>
<keyword id="KW-0903">Direct protein sequencing</keyword>
<keyword id="KW-0238">DNA-binding</keyword>
<keyword id="KW-1017">Isopeptide bond</keyword>
<keyword id="KW-0479">Metal-binding</keyword>
<keyword id="KW-0488">Methylation</keyword>
<keyword id="KW-0539">Nucleus</keyword>
<keyword id="KW-0597">Phosphoprotein</keyword>
<keyword id="KW-1267">Proteomics identification</keyword>
<keyword id="KW-0656">Proto-oncogene</keyword>
<keyword id="KW-1185">Reference proteome</keyword>
<keyword id="KW-0677">Repeat</keyword>
<keyword id="KW-0694">RNA-binding</keyword>
<keyword id="KW-0832">Ubl conjugation</keyword>
<keyword id="KW-0862">Zinc</keyword>
<keyword id="KW-0863">Zinc-finger</keyword>
<gene>
    <name type="primary">TAF15</name>
    <name type="synonym">RBP56</name>
    <name type="synonym">TAF2N</name>
</gene>
<organism>
    <name type="scientific">Homo sapiens</name>
    <name type="common">Human</name>
    <dbReference type="NCBI Taxonomy" id="9606"/>
    <lineage>
        <taxon>Eukaryota</taxon>
        <taxon>Metazoa</taxon>
        <taxon>Chordata</taxon>
        <taxon>Craniata</taxon>
        <taxon>Vertebrata</taxon>
        <taxon>Euteleostomi</taxon>
        <taxon>Mammalia</taxon>
        <taxon>Eutheria</taxon>
        <taxon>Euarchontoglires</taxon>
        <taxon>Primates</taxon>
        <taxon>Haplorrhini</taxon>
        <taxon>Catarrhini</taxon>
        <taxon>Hominidae</taxon>
        <taxon>Homo</taxon>
    </lineage>
</organism>
<comment type="function">
    <text evidence="5 6">RNA and ssDNA-binding protein that may play specific roles during transcription initiation at distinct promoters. Binds to ssRNA containing the consensus sequence 5'-AGGUAA-3' (PubMed:21256132). Can enter the preinitiation complex together with the RNA polymerase II (Pol II).</text>
</comment>
<comment type="subunit">
    <text>Belongs to the RNA polymerase II (Pol II) transcriptional multiprotein complex, together with the TATA-binding protein (TBP) and other TBP-associated factors (TAF(II)s). Binds SF1.</text>
</comment>
<comment type="interaction">
    <interactant intactId="EBI-2255091">
        <id>Q92804</id>
    </interactant>
    <interactant intactId="EBI-400434">
        <id>P35637</id>
        <label>FUS</label>
    </interactant>
    <organismsDiffer>false</organismsDiffer>
    <experiments>8</experiments>
</comment>
<comment type="interaction">
    <interactant intactId="EBI-2255091">
        <id>Q92804</id>
    </interactant>
    <interactant intactId="EBI-399080">
        <id>Q92993</id>
        <label>KAT5</label>
    </interactant>
    <organismsDiffer>false</organismsDiffer>
    <experiments>2</experiments>
</comment>
<comment type="subcellular location">
    <subcellularLocation>
        <location evidence="5">Nucleus</location>
    </subcellularLocation>
    <subcellularLocation>
        <location evidence="5">Cytoplasm</location>
    </subcellularLocation>
    <text>Shuttles from the nucleus to the cytoplasm.</text>
</comment>
<comment type="alternative products">
    <event type="alternative splicing"/>
    <isoform>
        <id>Q92804-1</id>
        <name>Long</name>
        <sequence type="displayed"/>
    </isoform>
    <isoform>
        <id>Q92804-2</id>
        <name>Short</name>
        <sequence type="described" ref="VSP_005806"/>
    </isoform>
</comment>
<comment type="tissue specificity">
    <text>Ubiquitous. Observed in all fetal and adult tissues.</text>
</comment>
<comment type="PTM">
    <text evidence="5 7">Dimethylated by PRMT1 at Arg-206 to asymmetric dimethylarginine. The methylation may favor nuclear localization and positive regulation of TAF15 transcriptional activity.</text>
</comment>
<comment type="PTM">
    <text>ADP-ribosylated during genotoxic stress.</text>
</comment>
<comment type="disease">
    <text evidence="4">A chromosomal aberration involving TAF15/TAF2N is found in a form of extraskeletal myxoid chondrosarcomas (EMC). Translocation t(9;17)(q22;q11) with NR4A3.</text>
</comment>
<comment type="similarity">
    <text evidence="11">Belongs to the RRM TET family.</text>
</comment>
<comment type="online information" name="Atlas of Genetics and Cytogenetics in Oncology and Haematology">
    <link uri="https://atlasgeneticsoncology.org/gene/256/TAF2N"/>
</comment>